<feature type="chain" id="PRO_0000101675" description="rRNA adenine N-6-methyltransferase">
    <location>
        <begin position="1"/>
        <end position="245"/>
    </location>
</feature>
<feature type="binding site" evidence="1">
    <location>
        <position position="10"/>
    </location>
    <ligand>
        <name>S-adenosyl-L-methionine</name>
        <dbReference type="ChEBI" id="CHEBI:59789"/>
    </ligand>
</feature>
<feature type="binding site" evidence="1">
    <location>
        <position position="12"/>
    </location>
    <ligand>
        <name>S-adenosyl-L-methionine</name>
        <dbReference type="ChEBI" id="CHEBI:59789"/>
    </ligand>
</feature>
<feature type="binding site" evidence="1">
    <location>
        <position position="37"/>
    </location>
    <ligand>
        <name>S-adenosyl-L-methionine</name>
        <dbReference type="ChEBI" id="CHEBI:59789"/>
    </ligand>
</feature>
<feature type="binding site" evidence="1">
    <location>
        <position position="58"/>
    </location>
    <ligand>
        <name>S-adenosyl-L-methionine</name>
        <dbReference type="ChEBI" id="CHEBI:59789"/>
    </ligand>
</feature>
<feature type="binding site" evidence="1">
    <location>
        <position position="83"/>
    </location>
    <ligand>
        <name>S-adenosyl-L-methionine</name>
        <dbReference type="ChEBI" id="CHEBI:59789"/>
    </ligand>
</feature>
<feature type="binding site" evidence="1">
    <location>
        <position position="100"/>
    </location>
    <ligand>
        <name>S-adenosyl-L-methionine</name>
        <dbReference type="ChEBI" id="CHEBI:59789"/>
    </ligand>
</feature>
<dbReference type="EC" id="2.1.1.184"/>
<dbReference type="EMBL" id="M19270">
    <property type="protein sequence ID" value="AAA25634.1"/>
    <property type="molecule type" value="Genomic_DNA"/>
</dbReference>
<dbReference type="PIR" id="B27739">
    <property type="entry name" value="B27739"/>
</dbReference>
<dbReference type="SMR" id="P10738"/>
<dbReference type="GO" id="GO:0005829">
    <property type="term" value="C:cytosol"/>
    <property type="evidence" value="ECO:0007669"/>
    <property type="project" value="TreeGrafter"/>
</dbReference>
<dbReference type="GO" id="GO:0052910">
    <property type="term" value="F:23S rRNA (adenine(2085)-N(6))-dimethyltransferase activity"/>
    <property type="evidence" value="ECO:0007669"/>
    <property type="project" value="UniProtKB-EC"/>
</dbReference>
<dbReference type="GO" id="GO:0003723">
    <property type="term" value="F:RNA binding"/>
    <property type="evidence" value="ECO:0007669"/>
    <property type="project" value="UniProtKB-KW"/>
</dbReference>
<dbReference type="GO" id="GO:0000179">
    <property type="term" value="F:rRNA (adenine-N6,N6-)-dimethyltransferase activity"/>
    <property type="evidence" value="ECO:0007669"/>
    <property type="project" value="InterPro"/>
</dbReference>
<dbReference type="GO" id="GO:0046677">
    <property type="term" value="P:response to antibiotic"/>
    <property type="evidence" value="ECO:0007669"/>
    <property type="project" value="UniProtKB-KW"/>
</dbReference>
<dbReference type="CDD" id="cd02440">
    <property type="entry name" value="AdoMet_MTases"/>
    <property type="match status" value="1"/>
</dbReference>
<dbReference type="Gene3D" id="1.10.8.100">
    <property type="entry name" value="Ribosomal RNA adenine dimethylase-like, domain 2"/>
    <property type="match status" value="1"/>
</dbReference>
<dbReference type="Gene3D" id="3.40.50.150">
    <property type="entry name" value="Vaccinia Virus protein VP39"/>
    <property type="match status" value="1"/>
</dbReference>
<dbReference type="InterPro" id="IPR001737">
    <property type="entry name" value="KsgA/Erm"/>
</dbReference>
<dbReference type="InterPro" id="IPR023165">
    <property type="entry name" value="rRNA_Ade_diMease-like_C"/>
</dbReference>
<dbReference type="InterPro" id="IPR020596">
    <property type="entry name" value="rRNA_Ade_Mease_Trfase_CS"/>
</dbReference>
<dbReference type="InterPro" id="IPR020598">
    <property type="entry name" value="rRNA_Ade_methylase_Trfase_N"/>
</dbReference>
<dbReference type="InterPro" id="IPR029063">
    <property type="entry name" value="SAM-dependent_MTases_sf"/>
</dbReference>
<dbReference type="NCBIfam" id="NF000499">
    <property type="entry name" value="Erm23S_rRNA_broad"/>
    <property type="match status" value="1"/>
</dbReference>
<dbReference type="NCBIfam" id="NF012220">
    <property type="entry name" value="erm_B_23S_MT"/>
    <property type="match status" value="1"/>
</dbReference>
<dbReference type="PANTHER" id="PTHR11727">
    <property type="entry name" value="DIMETHYLADENOSINE TRANSFERASE"/>
    <property type="match status" value="1"/>
</dbReference>
<dbReference type="PANTHER" id="PTHR11727:SF7">
    <property type="entry name" value="DIMETHYLADENOSINE TRANSFERASE-RELATED"/>
    <property type="match status" value="1"/>
</dbReference>
<dbReference type="Pfam" id="PF00398">
    <property type="entry name" value="RrnaAD"/>
    <property type="match status" value="1"/>
</dbReference>
<dbReference type="SMART" id="SM00650">
    <property type="entry name" value="rADc"/>
    <property type="match status" value="1"/>
</dbReference>
<dbReference type="SUPFAM" id="SSF53335">
    <property type="entry name" value="S-adenosyl-L-methionine-dependent methyltransferases"/>
    <property type="match status" value="1"/>
</dbReference>
<dbReference type="PROSITE" id="PS01131">
    <property type="entry name" value="RRNA_A_DIMETH"/>
    <property type="match status" value="1"/>
</dbReference>
<dbReference type="PROSITE" id="PS51689">
    <property type="entry name" value="SAM_RNA_A_N6_MT"/>
    <property type="match status" value="1"/>
</dbReference>
<keyword id="KW-0046">Antibiotic resistance</keyword>
<keyword id="KW-0489">Methyltransferase</keyword>
<keyword id="KW-0694">RNA-binding</keyword>
<keyword id="KW-0949">S-adenosyl-L-methionine</keyword>
<keyword id="KW-0808">Transferase</keyword>
<protein>
    <recommendedName>
        <fullName>rRNA adenine N-6-methyltransferase</fullName>
        <ecNumber>2.1.1.184</ecNumber>
    </recommendedName>
    <alternativeName>
        <fullName>Erythromycin resistance protein</fullName>
    </alternativeName>
    <alternativeName>
        <fullName>Macrolide-lincosamide-streptogramin B resistance protein</fullName>
    </alternativeName>
</protein>
<accession>P10738</accession>
<reference key="1">
    <citation type="journal article" date="1988" name="J. Bacteriol.">
        <title>Evidence for natural gene transfer from Gram-positive cocci to Escherichia coli.</title>
        <authorList>
            <person name="Brisson-Noel A."/>
            <person name="Arthur M."/>
            <person name="Courvalin P."/>
        </authorList>
    </citation>
    <scope>NUCLEOTIDE SEQUENCE [GENOMIC DNA]</scope>
</reference>
<evidence type="ECO:0000255" key="1">
    <source>
        <dbReference type="PROSITE-ProRule" id="PRU01026"/>
    </source>
</evidence>
<sequence length="245" mass="28785">MNKNIKYSQNFLTSEKVLNQIIKQLNLKETDTVYEIGTGKGHLTTKLAKISKQVTSIELDSHLFNLSSEKLKSNTRVTLIHQDILQFQFPNKQRYKIVGNIPYHLSTQIIKKVVFESHASDIYLIVEEGFYKRTLDIHRTLGLLLHTQVSIQQLLKLPAECFHPKPRVNSVLIKLTRHTTDVPDKYWKLYTYFVSKWVNREYRQLFTKNQFHQAMKHAKVNNLSTVTYEQVLSIFNSYLLFNGRK</sequence>
<gene>
    <name type="primary">ermBC</name>
</gene>
<organism>
    <name type="scientific">Escherichia coli</name>
    <dbReference type="NCBI Taxonomy" id="562"/>
    <lineage>
        <taxon>Bacteria</taxon>
        <taxon>Pseudomonadati</taxon>
        <taxon>Pseudomonadota</taxon>
        <taxon>Gammaproteobacteria</taxon>
        <taxon>Enterobacterales</taxon>
        <taxon>Enterobacteriaceae</taxon>
        <taxon>Escherichia</taxon>
    </lineage>
</organism>
<name>ERMB_ECOLX</name>
<proteinExistence type="inferred from homology"/>
<comment type="function">
    <text>This protein produces a dimethylation of the adenine residue at position 2085 in 23S rRNA, resulting in reduced affinity between ribosomes and macrolide-lincosamide-streptogramin B antibiotics.</text>
</comment>
<comment type="catalytic activity">
    <reaction>
        <text>adenosine(2085) in 23S rRNA + 2 S-adenosyl-L-methionine = N(6)-dimethyladenosine(2085) in 23S rRNA + 2 S-adenosyl-L-homocysteine + 2 H(+)</text>
        <dbReference type="Rhea" id="RHEA:42784"/>
        <dbReference type="Rhea" id="RHEA-COMP:10237"/>
        <dbReference type="Rhea" id="RHEA-COMP:10238"/>
        <dbReference type="ChEBI" id="CHEBI:15378"/>
        <dbReference type="ChEBI" id="CHEBI:57856"/>
        <dbReference type="ChEBI" id="CHEBI:59789"/>
        <dbReference type="ChEBI" id="CHEBI:74411"/>
        <dbReference type="ChEBI" id="CHEBI:74493"/>
        <dbReference type="EC" id="2.1.1.184"/>
    </reaction>
</comment>
<comment type="similarity">
    <text evidence="1">Belongs to the class I-like SAM-binding methyltransferase superfamily. rRNA adenine N(6)-methyltransferase family.</text>
</comment>